<sequence>MTQVAKKILVTCALPYANGSIHLGHMLEHIQADVWVRYQRMRGHEVNFICADDAHGTPIMLKAQQLGITPEQMIGEMSQEHQTDFAGFNISYDNYHSTHSEENRQLSELIYTRLKENGFIKNRTISQLYDPEKGMFLPDRFVKGTCPKCKAPDQYGDNCEVCGATYSPTELIEPKSVVSGATPVMRDSEHFFFDLPSFSEMLQAWTRSGALQEQVANKMQEWFESGLQQWDISRDAPYFGFEIPNAPGKYFYVWLDAPIGYMGSFKNLCDKRGDSVSFDEYWKKDSTAELYHFIGKDIVYFHSLFWPAMLEGSNFRKPTNLFVHGYVTVNGAKMSKSRGTFIKASTWLNHFDADSLRYYYTAKLSSRIDDIDLNLEDFVQRVNADIVNKVVNLASRNAGFINKRFDGVLASELADPQLYKTFTDAAEVIGEAWESREFGKAIREIMALADLANRYVDEQAPWVVAKQEGRDADLQAICSMGINLFRVLMTYLKPVLPKLTERAEAFLNTELTWDGIQQPLLGHKVNPFKALYNRIDMKQVEALVEASKEEVKAAAAPVTGPLADDPIQETITFDDFAKVDLRVALIENAEFVEGSDKLLRLTLDLGGEKRNVFSGIRSAYPDPQALIGRHTIMVANLAPRKMRFGISEGMVMAAGPGGKDIFLLSPDAGAKPGHQVK</sequence>
<feature type="chain" id="PRO_1000118731" description="Methionine--tRNA ligase">
    <location>
        <begin position="1"/>
        <end position="677"/>
    </location>
</feature>
<feature type="domain" description="tRNA-binding" evidence="1">
    <location>
        <begin position="575"/>
        <end position="677"/>
    </location>
</feature>
<feature type="short sequence motif" description="'HIGH' region">
    <location>
        <begin position="15"/>
        <end position="25"/>
    </location>
</feature>
<feature type="short sequence motif" description="'KMSKS' region">
    <location>
        <begin position="333"/>
        <end position="337"/>
    </location>
</feature>
<feature type="binding site" evidence="1">
    <location>
        <position position="146"/>
    </location>
    <ligand>
        <name>Zn(2+)</name>
        <dbReference type="ChEBI" id="CHEBI:29105"/>
    </ligand>
</feature>
<feature type="binding site" evidence="1">
    <location>
        <position position="149"/>
    </location>
    <ligand>
        <name>Zn(2+)</name>
        <dbReference type="ChEBI" id="CHEBI:29105"/>
    </ligand>
</feature>
<feature type="binding site" evidence="1">
    <location>
        <position position="159"/>
    </location>
    <ligand>
        <name>Zn(2+)</name>
        <dbReference type="ChEBI" id="CHEBI:29105"/>
    </ligand>
</feature>
<feature type="binding site" evidence="1">
    <location>
        <position position="162"/>
    </location>
    <ligand>
        <name>Zn(2+)</name>
        <dbReference type="ChEBI" id="CHEBI:29105"/>
    </ligand>
</feature>
<feature type="binding site" evidence="1">
    <location>
        <position position="336"/>
    </location>
    <ligand>
        <name>ATP</name>
        <dbReference type="ChEBI" id="CHEBI:30616"/>
    </ligand>
</feature>
<comment type="function">
    <text evidence="1">Is required not only for elongation of protein synthesis but also for the initiation of all mRNA translation through initiator tRNA(fMet) aminoacylation.</text>
</comment>
<comment type="catalytic activity">
    <reaction evidence="1">
        <text>tRNA(Met) + L-methionine + ATP = L-methionyl-tRNA(Met) + AMP + diphosphate</text>
        <dbReference type="Rhea" id="RHEA:13481"/>
        <dbReference type="Rhea" id="RHEA-COMP:9667"/>
        <dbReference type="Rhea" id="RHEA-COMP:9698"/>
        <dbReference type="ChEBI" id="CHEBI:30616"/>
        <dbReference type="ChEBI" id="CHEBI:33019"/>
        <dbReference type="ChEBI" id="CHEBI:57844"/>
        <dbReference type="ChEBI" id="CHEBI:78442"/>
        <dbReference type="ChEBI" id="CHEBI:78530"/>
        <dbReference type="ChEBI" id="CHEBI:456215"/>
        <dbReference type="EC" id="6.1.1.10"/>
    </reaction>
</comment>
<comment type="cofactor">
    <cofactor evidence="1">
        <name>Zn(2+)</name>
        <dbReference type="ChEBI" id="CHEBI:29105"/>
    </cofactor>
    <text evidence="1">Binds 1 zinc ion per subunit.</text>
</comment>
<comment type="subunit">
    <text evidence="1">Homodimer.</text>
</comment>
<comment type="subcellular location">
    <subcellularLocation>
        <location evidence="1">Cytoplasm</location>
    </subcellularLocation>
</comment>
<comment type="similarity">
    <text evidence="1">Belongs to the class-I aminoacyl-tRNA synthetase family. MetG type 1 subfamily.</text>
</comment>
<proteinExistence type="inferred from homology"/>
<reference key="1">
    <citation type="journal article" date="2009" name="J. Bacteriol.">
        <title>Complete genome sequence and comparative genome analysis of enteropathogenic Escherichia coli O127:H6 strain E2348/69.</title>
        <authorList>
            <person name="Iguchi A."/>
            <person name="Thomson N.R."/>
            <person name="Ogura Y."/>
            <person name="Saunders D."/>
            <person name="Ooka T."/>
            <person name="Henderson I.R."/>
            <person name="Harris D."/>
            <person name="Asadulghani M."/>
            <person name="Kurokawa K."/>
            <person name="Dean P."/>
            <person name="Kenny B."/>
            <person name="Quail M.A."/>
            <person name="Thurston S."/>
            <person name="Dougan G."/>
            <person name="Hayashi T."/>
            <person name="Parkhill J."/>
            <person name="Frankel G."/>
        </authorList>
    </citation>
    <scope>NUCLEOTIDE SEQUENCE [LARGE SCALE GENOMIC DNA]</scope>
    <source>
        <strain>E2348/69 / EPEC</strain>
    </source>
</reference>
<dbReference type="EC" id="6.1.1.10" evidence="1"/>
<dbReference type="EMBL" id="FM180568">
    <property type="protein sequence ID" value="CAS09808.1"/>
    <property type="molecule type" value="Genomic_DNA"/>
</dbReference>
<dbReference type="RefSeq" id="WP_001340073.1">
    <property type="nucleotide sequence ID" value="NC_011601.1"/>
</dbReference>
<dbReference type="SMR" id="B7UFD1"/>
<dbReference type="KEGG" id="ecg:E2348C_2260"/>
<dbReference type="HOGENOM" id="CLU_009710_7_0_6"/>
<dbReference type="Proteomes" id="UP000008205">
    <property type="component" value="Chromosome"/>
</dbReference>
<dbReference type="GO" id="GO:0005829">
    <property type="term" value="C:cytosol"/>
    <property type="evidence" value="ECO:0007669"/>
    <property type="project" value="TreeGrafter"/>
</dbReference>
<dbReference type="GO" id="GO:0005524">
    <property type="term" value="F:ATP binding"/>
    <property type="evidence" value="ECO:0007669"/>
    <property type="project" value="UniProtKB-UniRule"/>
</dbReference>
<dbReference type="GO" id="GO:0046872">
    <property type="term" value="F:metal ion binding"/>
    <property type="evidence" value="ECO:0007669"/>
    <property type="project" value="UniProtKB-KW"/>
</dbReference>
<dbReference type="GO" id="GO:0004825">
    <property type="term" value="F:methionine-tRNA ligase activity"/>
    <property type="evidence" value="ECO:0007669"/>
    <property type="project" value="UniProtKB-UniRule"/>
</dbReference>
<dbReference type="GO" id="GO:0000049">
    <property type="term" value="F:tRNA binding"/>
    <property type="evidence" value="ECO:0007669"/>
    <property type="project" value="UniProtKB-KW"/>
</dbReference>
<dbReference type="GO" id="GO:0006431">
    <property type="term" value="P:methionyl-tRNA aminoacylation"/>
    <property type="evidence" value="ECO:0007669"/>
    <property type="project" value="UniProtKB-UniRule"/>
</dbReference>
<dbReference type="CDD" id="cd07957">
    <property type="entry name" value="Anticodon_Ia_Met"/>
    <property type="match status" value="1"/>
</dbReference>
<dbReference type="CDD" id="cd00814">
    <property type="entry name" value="MetRS_core"/>
    <property type="match status" value="1"/>
</dbReference>
<dbReference type="CDD" id="cd02800">
    <property type="entry name" value="tRNA_bind_EcMetRS_like"/>
    <property type="match status" value="1"/>
</dbReference>
<dbReference type="FunFam" id="1.10.730.10:FF:000005">
    <property type="entry name" value="Methionine--tRNA ligase"/>
    <property type="match status" value="1"/>
</dbReference>
<dbReference type="FunFam" id="2.20.28.20:FF:000001">
    <property type="entry name" value="Methionine--tRNA ligase"/>
    <property type="match status" value="1"/>
</dbReference>
<dbReference type="FunFam" id="2.40.50.140:FF:000042">
    <property type="entry name" value="Methionine--tRNA ligase"/>
    <property type="match status" value="1"/>
</dbReference>
<dbReference type="Gene3D" id="3.40.50.620">
    <property type="entry name" value="HUPs"/>
    <property type="match status" value="1"/>
</dbReference>
<dbReference type="Gene3D" id="1.10.730.10">
    <property type="entry name" value="Isoleucyl-tRNA Synthetase, Domain 1"/>
    <property type="match status" value="1"/>
</dbReference>
<dbReference type="Gene3D" id="2.20.28.20">
    <property type="entry name" value="Methionyl-tRNA synthetase, Zn-domain"/>
    <property type="match status" value="1"/>
</dbReference>
<dbReference type="Gene3D" id="2.40.50.140">
    <property type="entry name" value="Nucleic acid-binding proteins"/>
    <property type="match status" value="1"/>
</dbReference>
<dbReference type="HAMAP" id="MF_00098">
    <property type="entry name" value="Met_tRNA_synth_type1"/>
    <property type="match status" value="1"/>
</dbReference>
<dbReference type="InterPro" id="IPR001412">
    <property type="entry name" value="aa-tRNA-synth_I_CS"/>
</dbReference>
<dbReference type="InterPro" id="IPR041872">
    <property type="entry name" value="Anticodon_Met"/>
</dbReference>
<dbReference type="InterPro" id="IPR004495">
    <property type="entry name" value="Met-tRNA-synth_bsu_C"/>
</dbReference>
<dbReference type="InterPro" id="IPR023458">
    <property type="entry name" value="Met-tRNA_ligase_1"/>
</dbReference>
<dbReference type="InterPro" id="IPR014758">
    <property type="entry name" value="Met-tRNA_synth"/>
</dbReference>
<dbReference type="InterPro" id="IPR015413">
    <property type="entry name" value="Methionyl/Leucyl_tRNA_Synth"/>
</dbReference>
<dbReference type="InterPro" id="IPR033911">
    <property type="entry name" value="MetRS_core"/>
</dbReference>
<dbReference type="InterPro" id="IPR029038">
    <property type="entry name" value="MetRS_Zn"/>
</dbReference>
<dbReference type="InterPro" id="IPR012340">
    <property type="entry name" value="NA-bd_OB-fold"/>
</dbReference>
<dbReference type="InterPro" id="IPR014729">
    <property type="entry name" value="Rossmann-like_a/b/a_fold"/>
</dbReference>
<dbReference type="InterPro" id="IPR002547">
    <property type="entry name" value="tRNA-bd_dom"/>
</dbReference>
<dbReference type="InterPro" id="IPR009080">
    <property type="entry name" value="tRNAsynth_Ia_anticodon-bd"/>
</dbReference>
<dbReference type="NCBIfam" id="TIGR00398">
    <property type="entry name" value="metG"/>
    <property type="match status" value="1"/>
</dbReference>
<dbReference type="NCBIfam" id="TIGR00399">
    <property type="entry name" value="metG_C_term"/>
    <property type="match status" value="1"/>
</dbReference>
<dbReference type="NCBIfam" id="NF001100">
    <property type="entry name" value="PRK00133.1"/>
    <property type="match status" value="1"/>
</dbReference>
<dbReference type="PANTHER" id="PTHR45765">
    <property type="entry name" value="METHIONINE--TRNA LIGASE"/>
    <property type="match status" value="1"/>
</dbReference>
<dbReference type="PANTHER" id="PTHR45765:SF1">
    <property type="entry name" value="METHIONINE--TRNA LIGASE, CYTOPLASMIC"/>
    <property type="match status" value="1"/>
</dbReference>
<dbReference type="Pfam" id="PF19303">
    <property type="entry name" value="Anticodon_3"/>
    <property type="match status" value="1"/>
</dbReference>
<dbReference type="Pfam" id="PF09334">
    <property type="entry name" value="tRNA-synt_1g"/>
    <property type="match status" value="1"/>
</dbReference>
<dbReference type="Pfam" id="PF01588">
    <property type="entry name" value="tRNA_bind"/>
    <property type="match status" value="1"/>
</dbReference>
<dbReference type="PRINTS" id="PR01041">
    <property type="entry name" value="TRNASYNTHMET"/>
</dbReference>
<dbReference type="SUPFAM" id="SSF47323">
    <property type="entry name" value="Anticodon-binding domain of a subclass of class I aminoacyl-tRNA synthetases"/>
    <property type="match status" value="1"/>
</dbReference>
<dbReference type="SUPFAM" id="SSF57770">
    <property type="entry name" value="Methionyl-tRNA synthetase (MetRS), Zn-domain"/>
    <property type="match status" value="1"/>
</dbReference>
<dbReference type="SUPFAM" id="SSF50249">
    <property type="entry name" value="Nucleic acid-binding proteins"/>
    <property type="match status" value="1"/>
</dbReference>
<dbReference type="SUPFAM" id="SSF52374">
    <property type="entry name" value="Nucleotidylyl transferase"/>
    <property type="match status" value="1"/>
</dbReference>
<dbReference type="PROSITE" id="PS00178">
    <property type="entry name" value="AA_TRNA_LIGASE_I"/>
    <property type="match status" value="1"/>
</dbReference>
<dbReference type="PROSITE" id="PS50886">
    <property type="entry name" value="TRBD"/>
    <property type="match status" value="1"/>
</dbReference>
<name>SYM_ECO27</name>
<keyword id="KW-0030">Aminoacyl-tRNA synthetase</keyword>
<keyword id="KW-0067">ATP-binding</keyword>
<keyword id="KW-0963">Cytoplasm</keyword>
<keyword id="KW-0436">Ligase</keyword>
<keyword id="KW-0479">Metal-binding</keyword>
<keyword id="KW-0547">Nucleotide-binding</keyword>
<keyword id="KW-0648">Protein biosynthesis</keyword>
<keyword id="KW-1185">Reference proteome</keyword>
<keyword id="KW-0694">RNA-binding</keyword>
<keyword id="KW-0820">tRNA-binding</keyword>
<keyword id="KW-0862">Zinc</keyword>
<protein>
    <recommendedName>
        <fullName evidence="1">Methionine--tRNA ligase</fullName>
        <ecNumber evidence="1">6.1.1.10</ecNumber>
    </recommendedName>
    <alternativeName>
        <fullName evidence="1">Methionyl-tRNA synthetase</fullName>
        <shortName evidence="1">MetRS</shortName>
    </alternativeName>
</protein>
<accession>B7UFD1</accession>
<evidence type="ECO:0000255" key="1">
    <source>
        <dbReference type="HAMAP-Rule" id="MF_00098"/>
    </source>
</evidence>
<gene>
    <name evidence="1" type="primary">metG</name>
    <name type="ordered locus">E2348C_2260</name>
</gene>
<organism>
    <name type="scientific">Escherichia coli O127:H6 (strain E2348/69 / EPEC)</name>
    <dbReference type="NCBI Taxonomy" id="574521"/>
    <lineage>
        <taxon>Bacteria</taxon>
        <taxon>Pseudomonadati</taxon>
        <taxon>Pseudomonadota</taxon>
        <taxon>Gammaproteobacteria</taxon>
        <taxon>Enterobacterales</taxon>
        <taxon>Enterobacteriaceae</taxon>
        <taxon>Escherichia</taxon>
    </lineage>
</organism>